<protein>
    <recommendedName>
        <fullName evidence="1">tRNA N6-adenosine threonylcarbamoyltransferase</fullName>
        <ecNumber evidence="1">2.3.1.234</ecNumber>
    </recommendedName>
    <alternativeName>
        <fullName evidence="1">N6-L-threonylcarbamoyladenine synthase</fullName>
        <shortName evidence="1">t(6)A synthase</shortName>
    </alternativeName>
    <alternativeName>
        <fullName evidence="1">t(6)A37 threonylcarbamoyladenosine biosynthesis protein TsaD</fullName>
    </alternativeName>
    <alternativeName>
        <fullName evidence="1">tRNA threonylcarbamoyladenosine biosynthesis protein TsaD</fullName>
    </alternativeName>
</protein>
<evidence type="ECO:0000255" key="1">
    <source>
        <dbReference type="HAMAP-Rule" id="MF_01445"/>
    </source>
</evidence>
<keyword id="KW-0012">Acyltransferase</keyword>
<keyword id="KW-0963">Cytoplasm</keyword>
<keyword id="KW-0408">Iron</keyword>
<keyword id="KW-0479">Metal-binding</keyword>
<keyword id="KW-0808">Transferase</keyword>
<keyword id="KW-0819">tRNA processing</keyword>
<dbReference type="EC" id="2.3.1.234" evidence="1"/>
<dbReference type="EMBL" id="CP000109">
    <property type="protein sequence ID" value="ABB42402.1"/>
    <property type="molecule type" value="Genomic_DNA"/>
</dbReference>
<dbReference type="SMR" id="Q31EM1"/>
<dbReference type="STRING" id="317025.Tcr_1810"/>
<dbReference type="KEGG" id="tcx:Tcr_1810"/>
<dbReference type="eggNOG" id="COG0533">
    <property type="taxonomic scope" value="Bacteria"/>
</dbReference>
<dbReference type="HOGENOM" id="CLU_023208_0_0_6"/>
<dbReference type="OrthoDB" id="9806197at2"/>
<dbReference type="GO" id="GO:0005737">
    <property type="term" value="C:cytoplasm"/>
    <property type="evidence" value="ECO:0007669"/>
    <property type="project" value="UniProtKB-SubCell"/>
</dbReference>
<dbReference type="GO" id="GO:0005506">
    <property type="term" value="F:iron ion binding"/>
    <property type="evidence" value="ECO:0007669"/>
    <property type="project" value="UniProtKB-UniRule"/>
</dbReference>
<dbReference type="GO" id="GO:0061711">
    <property type="term" value="F:N(6)-L-threonylcarbamoyladenine synthase activity"/>
    <property type="evidence" value="ECO:0007669"/>
    <property type="project" value="UniProtKB-EC"/>
</dbReference>
<dbReference type="GO" id="GO:0002949">
    <property type="term" value="P:tRNA threonylcarbamoyladenosine modification"/>
    <property type="evidence" value="ECO:0007669"/>
    <property type="project" value="UniProtKB-UniRule"/>
</dbReference>
<dbReference type="CDD" id="cd24133">
    <property type="entry name" value="ASKHA_NBD_TsaD_bac"/>
    <property type="match status" value="1"/>
</dbReference>
<dbReference type="FunFam" id="3.30.420.40:FF:000031">
    <property type="entry name" value="tRNA N6-adenosine threonylcarbamoyltransferase"/>
    <property type="match status" value="1"/>
</dbReference>
<dbReference type="Gene3D" id="3.30.420.40">
    <property type="match status" value="2"/>
</dbReference>
<dbReference type="HAMAP" id="MF_01445">
    <property type="entry name" value="TsaD"/>
    <property type="match status" value="1"/>
</dbReference>
<dbReference type="InterPro" id="IPR043129">
    <property type="entry name" value="ATPase_NBD"/>
</dbReference>
<dbReference type="InterPro" id="IPR000905">
    <property type="entry name" value="Gcp-like_dom"/>
</dbReference>
<dbReference type="InterPro" id="IPR017861">
    <property type="entry name" value="KAE1/TsaD"/>
</dbReference>
<dbReference type="InterPro" id="IPR017860">
    <property type="entry name" value="Peptidase_M22_CS"/>
</dbReference>
<dbReference type="InterPro" id="IPR022450">
    <property type="entry name" value="TsaD"/>
</dbReference>
<dbReference type="NCBIfam" id="TIGR00329">
    <property type="entry name" value="gcp_kae1"/>
    <property type="match status" value="1"/>
</dbReference>
<dbReference type="NCBIfam" id="TIGR03723">
    <property type="entry name" value="T6A_TsaD_YgjD"/>
    <property type="match status" value="1"/>
</dbReference>
<dbReference type="PANTHER" id="PTHR11735">
    <property type="entry name" value="TRNA N6-ADENOSINE THREONYLCARBAMOYLTRANSFERASE"/>
    <property type="match status" value="1"/>
</dbReference>
<dbReference type="PANTHER" id="PTHR11735:SF6">
    <property type="entry name" value="TRNA N6-ADENOSINE THREONYLCARBAMOYLTRANSFERASE, MITOCHONDRIAL"/>
    <property type="match status" value="1"/>
</dbReference>
<dbReference type="Pfam" id="PF00814">
    <property type="entry name" value="TsaD"/>
    <property type="match status" value="1"/>
</dbReference>
<dbReference type="PRINTS" id="PR00789">
    <property type="entry name" value="OSIALOPTASE"/>
</dbReference>
<dbReference type="SUPFAM" id="SSF53067">
    <property type="entry name" value="Actin-like ATPase domain"/>
    <property type="match status" value="2"/>
</dbReference>
<dbReference type="PROSITE" id="PS01016">
    <property type="entry name" value="GLYCOPROTEASE"/>
    <property type="match status" value="1"/>
</dbReference>
<sequence length="358" mass="38805">MQTTHSNPSSPSLTLGIETSCDETGIALYHSEKGLIAHTLYSQIKLHAEYGGVVPELASRDHIRKITPLIQETLKKGQVSAKDITGIAYTAGPGLMGALLSGASVARSLAFAWQIPAIAIHHMEGHLLAPMLEETQPEFPFVCLLVSGGHTMIIRVDGIGRYKLLGDTLDDAAGEAFDKTAKMLGLGYPGGPEVSKLALHGQTDRYKFPRPMVDRPGLDMSFSGLKTFTLNTWLKAKESGDDSEQTKADICRAFEVAVADTLSIKCKRALEQEGLNRLVVSGGVSANREIRAKLDALMAKRKGSAFYPRLEFCTDNGAMIAYAGSKRLEAGQFSDLNFACQPRWDLESLEPIDPIEVV</sequence>
<gene>
    <name evidence="1" type="primary">tsaD</name>
    <name type="synonym">gcp</name>
    <name type="ordered locus">Tcr_1810</name>
</gene>
<feature type="chain" id="PRO_0000303599" description="tRNA N6-adenosine threonylcarbamoyltransferase">
    <location>
        <begin position="1"/>
        <end position="358"/>
    </location>
</feature>
<feature type="binding site" evidence="1">
    <location>
        <position position="122"/>
    </location>
    <ligand>
        <name>Fe cation</name>
        <dbReference type="ChEBI" id="CHEBI:24875"/>
    </ligand>
</feature>
<feature type="binding site" evidence="1">
    <location>
        <position position="126"/>
    </location>
    <ligand>
        <name>Fe cation</name>
        <dbReference type="ChEBI" id="CHEBI:24875"/>
    </ligand>
</feature>
<feature type="binding site" evidence="1">
    <location>
        <begin position="145"/>
        <end position="149"/>
    </location>
    <ligand>
        <name>substrate</name>
    </ligand>
</feature>
<feature type="binding site" evidence="1">
    <location>
        <position position="178"/>
    </location>
    <ligand>
        <name>substrate</name>
    </ligand>
</feature>
<feature type="binding site" evidence="1">
    <location>
        <position position="191"/>
    </location>
    <ligand>
        <name>substrate</name>
    </ligand>
</feature>
<feature type="binding site" evidence="1">
    <location>
        <position position="287"/>
    </location>
    <ligand>
        <name>substrate</name>
    </ligand>
</feature>
<feature type="binding site" evidence="1">
    <location>
        <position position="315"/>
    </location>
    <ligand>
        <name>Fe cation</name>
        <dbReference type="ChEBI" id="CHEBI:24875"/>
    </ligand>
</feature>
<name>TSAD_HYDCU</name>
<comment type="function">
    <text evidence="1">Required for the formation of a threonylcarbamoyl group on adenosine at position 37 (t(6)A37) in tRNAs that read codons beginning with adenine. Is involved in the transfer of the threonylcarbamoyl moiety of threonylcarbamoyl-AMP (TC-AMP) to the N6 group of A37, together with TsaE and TsaB. TsaD likely plays a direct catalytic role in this reaction.</text>
</comment>
<comment type="catalytic activity">
    <reaction evidence="1">
        <text>L-threonylcarbamoyladenylate + adenosine(37) in tRNA = N(6)-L-threonylcarbamoyladenosine(37) in tRNA + AMP + H(+)</text>
        <dbReference type="Rhea" id="RHEA:37059"/>
        <dbReference type="Rhea" id="RHEA-COMP:10162"/>
        <dbReference type="Rhea" id="RHEA-COMP:10163"/>
        <dbReference type="ChEBI" id="CHEBI:15378"/>
        <dbReference type="ChEBI" id="CHEBI:73682"/>
        <dbReference type="ChEBI" id="CHEBI:74411"/>
        <dbReference type="ChEBI" id="CHEBI:74418"/>
        <dbReference type="ChEBI" id="CHEBI:456215"/>
        <dbReference type="EC" id="2.3.1.234"/>
    </reaction>
</comment>
<comment type="cofactor">
    <cofactor evidence="1">
        <name>Fe(2+)</name>
        <dbReference type="ChEBI" id="CHEBI:29033"/>
    </cofactor>
    <text evidence="1">Binds 1 Fe(2+) ion per subunit.</text>
</comment>
<comment type="subcellular location">
    <subcellularLocation>
        <location evidence="1">Cytoplasm</location>
    </subcellularLocation>
</comment>
<comment type="similarity">
    <text evidence="1">Belongs to the KAE1 / TsaD family.</text>
</comment>
<reference key="1">
    <citation type="journal article" date="2006" name="PLoS Biol.">
        <title>The genome of deep-sea vent chemolithoautotroph Thiomicrospira crunogena XCL-2.</title>
        <authorList>
            <person name="Scott K.M."/>
            <person name="Sievert S.M."/>
            <person name="Abril F.N."/>
            <person name="Ball L.A."/>
            <person name="Barrett C.J."/>
            <person name="Blake R.A."/>
            <person name="Boller A.J."/>
            <person name="Chain P.S.G."/>
            <person name="Clark J.A."/>
            <person name="Davis C.R."/>
            <person name="Detter C."/>
            <person name="Do K.F."/>
            <person name="Dobrinski K.P."/>
            <person name="Faza B.I."/>
            <person name="Fitzpatrick K.A."/>
            <person name="Freyermuth S.K."/>
            <person name="Harmer T.L."/>
            <person name="Hauser L.J."/>
            <person name="Huegler M."/>
            <person name="Kerfeld C.A."/>
            <person name="Klotz M.G."/>
            <person name="Kong W.W."/>
            <person name="Land M."/>
            <person name="Lapidus A."/>
            <person name="Larimer F.W."/>
            <person name="Longo D.L."/>
            <person name="Lucas S."/>
            <person name="Malfatti S.A."/>
            <person name="Massey S.E."/>
            <person name="Martin D.D."/>
            <person name="McCuddin Z."/>
            <person name="Meyer F."/>
            <person name="Moore J.L."/>
            <person name="Ocampo L.H. Jr."/>
            <person name="Paul J.H."/>
            <person name="Paulsen I.T."/>
            <person name="Reep D.K."/>
            <person name="Ren Q."/>
            <person name="Ross R.L."/>
            <person name="Sato P.Y."/>
            <person name="Thomas P."/>
            <person name="Tinkham L.E."/>
            <person name="Zeruth G.T."/>
        </authorList>
    </citation>
    <scope>NUCLEOTIDE SEQUENCE [LARGE SCALE GENOMIC DNA]</scope>
    <source>
        <strain>DSM 25203 / XCL-2</strain>
    </source>
</reference>
<accession>Q31EM1</accession>
<organism>
    <name type="scientific">Hydrogenovibrio crunogenus (strain DSM 25203 / XCL-2)</name>
    <name type="common">Thiomicrospira crunogena</name>
    <dbReference type="NCBI Taxonomy" id="317025"/>
    <lineage>
        <taxon>Bacteria</taxon>
        <taxon>Pseudomonadati</taxon>
        <taxon>Pseudomonadota</taxon>
        <taxon>Gammaproteobacteria</taxon>
        <taxon>Thiotrichales</taxon>
        <taxon>Piscirickettsiaceae</taxon>
        <taxon>Hydrogenovibrio</taxon>
    </lineage>
</organism>
<proteinExistence type="inferred from homology"/>